<proteinExistence type="inferred from homology"/>
<feature type="signal peptide" evidence="1">
    <location>
        <begin position="1"/>
        <end position="31"/>
    </location>
</feature>
<feature type="chain" id="PRO_0000009223" description="Minor fimbrial subunit HifE">
    <location>
        <begin position="32"/>
        <end position="435"/>
    </location>
</feature>
<sequence length="435" mass="48852">MKTLTTYAKYFTPISKIAFLFCFLMGNIAEATIKRAKFTNGFSGINRIITYTFEGSSTMIASATTPEQILFSKARDNTVIDPSYSNNVQQWSVFNNWIDTTVSGDTGYSFAGFSCVSNPCAQMQLPLRFYLDSAILEATSMRSADNQVIFKIRQHPELGVSFQLGMKKGIEDVKWLSNLQQEDFLLTTLQIYFGDAADISFKVRAKLHLLKLPTENTELPTMKLNLGQIKLQSWGINNWGRTKVSYRVQDVGSLNVQLKTPKIYFIQQQRQCILNSTYKKIPVTLKSVKKREFETNTEIEGGQFKLRVNCEDTTYNKFNGKWLFPVVKVTFRGEDGTMNDGTNELLRTQTGTGQATGVSLKIKRDSGNGDSVKYGLDSANMNNHGQFELKKQPSPAGGDQSAEETFKVYYVKDTTRGALTEGKVKAAATFTMSYQ</sequence>
<organism>
    <name type="scientific">Haemophilus influenzae</name>
    <dbReference type="NCBI Taxonomy" id="727"/>
    <lineage>
        <taxon>Bacteria</taxon>
        <taxon>Pseudomonadati</taxon>
        <taxon>Pseudomonadota</taxon>
        <taxon>Gammaproteobacteria</taxon>
        <taxon>Pasteurellales</taxon>
        <taxon>Pasteurellaceae</taxon>
        <taxon>Haemophilus</taxon>
    </lineage>
</organism>
<comment type="function">
    <text>May be a minor structural protein required for pilus biogenesis. May be the adhesive component in the pili.</text>
</comment>
<comment type="subcellular location">
    <subcellularLocation>
        <location evidence="2">Fimbrium</location>
    </subcellularLocation>
</comment>
<comment type="similarity">
    <text evidence="2">Belongs to the fimbrial protein family.</text>
</comment>
<name>HIFE1_HAEIF</name>
<evidence type="ECO:0000255" key="1"/>
<evidence type="ECO:0000305" key="2"/>
<accession>P45994</accession>
<protein>
    <recommendedName>
        <fullName>Minor fimbrial subunit HifE</fullName>
    </recommendedName>
</protein>
<gene>
    <name type="primary">hifE</name>
</gene>
<dbReference type="EMBL" id="U13254">
    <property type="protein sequence ID" value="AAA61542.1"/>
    <property type="molecule type" value="Genomic_DNA"/>
</dbReference>
<dbReference type="EMBL" id="Z33502">
    <property type="protein sequence ID" value="CAA83904.1"/>
    <property type="molecule type" value="Genomic_DNA"/>
</dbReference>
<dbReference type="PIR" id="S68865">
    <property type="entry name" value="S68865"/>
</dbReference>
<dbReference type="RefSeq" id="WP_157140395.1">
    <property type="nucleotide sequence ID" value="NZ_CP082856.1"/>
</dbReference>
<dbReference type="SMR" id="P45994"/>
<dbReference type="GO" id="GO:0009289">
    <property type="term" value="C:pilus"/>
    <property type="evidence" value="ECO:0007669"/>
    <property type="project" value="UniProtKB-SubCell"/>
</dbReference>
<dbReference type="GO" id="GO:0043709">
    <property type="term" value="P:cell adhesion involved in single-species biofilm formation"/>
    <property type="evidence" value="ECO:0007669"/>
    <property type="project" value="TreeGrafter"/>
</dbReference>
<dbReference type="Gene3D" id="2.60.40.1090">
    <property type="entry name" value="Fimbrial-type adhesion domain"/>
    <property type="match status" value="1"/>
</dbReference>
<dbReference type="InterPro" id="IPR000259">
    <property type="entry name" value="Adhesion_dom_fimbrial"/>
</dbReference>
<dbReference type="InterPro" id="IPR036937">
    <property type="entry name" value="Adhesion_dom_fimbrial_sf"/>
</dbReference>
<dbReference type="InterPro" id="IPR008966">
    <property type="entry name" value="Adhesion_dom_sf"/>
</dbReference>
<dbReference type="InterPro" id="IPR050263">
    <property type="entry name" value="Bact_Fimbrial_Adh_Pro"/>
</dbReference>
<dbReference type="PANTHER" id="PTHR33420:SF3">
    <property type="entry name" value="FIMBRIAL SUBUNIT ELFA"/>
    <property type="match status" value="1"/>
</dbReference>
<dbReference type="PANTHER" id="PTHR33420">
    <property type="entry name" value="FIMBRIAL SUBUNIT ELFA-RELATED"/>
    <property type="match status" value="1"/>
</dbReference>
<dbReference type="Pfam" id="PF00419">
    <property type="entry name" value="Fimbrial"/>
    <property type="match status" value="1"/>
</dbReference>
<dbReference type="SUPFAM" id="SSF49401">
    <property type="entry name" value="Bacterial adhesins"/>
    <property type="match status" value="1"/>
</dbReference>
<reference key="1">
    <citation type="journal article" date="1994" name="Infect. Immun.">
        <title>Identification of hifD and hifE in the pilus gene cluster of Haemophilus influenzae type b strain Eagan.</title>
        <authorList>
            <person name="McCrea K.W."/>
            <person name="Watson W.J."/>
            <person name="Gilsdorf J.R."/>
            <person name="Marrs C.F."/>
        </authorList>
    </citation>
    <scope>NUCLEOTIDE SEQUENCE [GENOMIC DNA]</scope>
    <source>
        <strain>Eagan / Serotype B</strain>
    </source>
</reference>
<reference key="2">
    <citation type="journal article" date="1994" name="Mol. Microbiol.">
        <title>The fimbrial gene cluster of Haemophilus influenzae type b.</title>
        <authorList>
            <person name="van Ham M.S."/>
            <person name="van Alphen L."/>
            <person name="Mooi F.R."/>
            <person name="van Putten J.P.M."/>
        </authorList>
    </citation>
    <scope>NUCLEOTIDE SEQUENCE [GENOMIC DNA]</scope>
    <source>
        <strain>AM30 (770235) / Serotype B</strain>
    </source>
</reference>
<keyword id="KW-0281">Fimbrium</keyword>
<keyword id="KW-0732">Signal</keyword>